<reference key="1">
    <citation type="journal article" date="2009" name="PLoS ONE">
        <title>Genome analysis of the anaerobic thermohalophilic bacterium Halothermothrix orenii.</title>
        <authorList>
            <person name="Mavromatis K."/>
            <person name="Ivanova N."/>
            <person name="Anderson I."/>
            <person name="Lykidis A."/>
            <person name="Hooper S.D."/>
            <person name="Sun H."/>
            <person name="Kunin V."/>
            <person name="Lapidus A."/>
            <person name="Hugenholtz P."/>
            <person name="Patel B."/>
            <person name="Kyrpides N.C."/>
        </authorList>
    </citation>
    <scope>NUCLEOTIDE SEQUENCE [LARGE SCALE GENOMIC DNA]</scope>
    <source>
        <strain>H 168 / OCM 544 / DSM 9562</strain>
    </source>
</reference>
<gene>
    <name evidence="1" type="primary">secA</name>
    <name type="ordered locus">Hore_16440</name>
</gene>
<proteinExistence type="inferred from homology"/>
<organism>
    <name type="scientific">Halothermothrix orenii (strain H 168 / OCM 544 / DSM 9562)</name>
    <dbReference type="NCBI Taxonomy" id="373903"/>
    <lineage>
        <taxon>Bacteria</taxon>
        <taxon>Bacillati</taxon>
        <taxon>Bacillota</taxon>
        <taxon>Clostridia</taxon>
        <taxon>Halanaerobiales</taxon>
        <taxon>Halothermotrichaceae</taxon>
        <taxon>Halothermothrix</taxon>
    </lineage>
</organism>
<protein>
    <recommendedName>
        <fullName evidence="1">Protein translocase subunit SecA</fullName>
        <ecNumber evidence="1">7.4.2.8</ecNumber>
    </recommendedName>
</protein>
<dbReference type="EC" id="7.4.2.8" evidence="1"/>
<dbReference type="EMBL" id="CP001098">
    <property type="protein sequence ID" value="ACL70393.1"/>
    <property type="molecule type" value="Genomic_DNA"/>
</dbReference>
<dbReference type="RefSeq" id="WP_012636576.1">
    <property type="nucleotide sequence ID" value="NC_011899.1"/>
</dbReference>
<dbReference type="SMR" id="B8CYM4"/>
<dbReference type="STRING" id="373903.Hore_16440"/>
<dbReference type="KEGG" id="hor:Hore_16440"/>
<dbReference type="eggNOG" id="COG0653">
    <property type="taxonomic scope" value="Bacteria"/>
</dbReference>
<dbReference type="HOGENOM" id="CLU_005314_3_0_9"/>
<dbReference type="OrthoDB" id="9805579at2"/>
<dbReference type="Proteomes" id="UP000000719">
    <property type="component" value="Chromosome"/>
</dbReference>
<dbReference type="GO" id="GO:0031522">
    <property type="term" value="C:cell envelope Sec protein transport complex"/>
    <property type="evidence" value="ECO:0007669"/>
    <property type="project" value="TreeGrafter"/>
</dbReference>
<dbReference type="GO" id="GO:0005829">
    <property type="term" value="C:cytosol"/>
    <property type="evidence" value="ECO:0007669"/>
    <property type="project" value="TreeGrafter"/>
</dbReference>
<dbReference type="GO" id="GO:0005886">
    <property type="term" value="C:plasma membrane"/>
    <property type="evidence" value="ECO:0007669"/>
    <property type="project" value="UniProtKB-SubCell"/>
</dbReference>
<dbReference type="GO" id="GO:0005524">
    <property type="term" value="F:ATP binding"/>
    <property type="evidence" value="ECO:0007669"/>
    <property type="project" value="UniProtKB-UniRule"/>
</dbReference>
<dbReference type="GO" id="GO:0046872">
    <property type="term" value="F:metal ion binding"/>
    <property type="evidence" value="ECO:0007669"/>
    <property type="project" value="UniProtKB-KW"/>
</dbReference>
<dbReference type="GO" id="GO:0008564">
    <property type="term" value="F:protein-exporting ATPase activity"/>
    <property type="evidence" value="ECO:0007669"/>
    <property type="project" value="UniProtKB-EC"/>
</dbReference>
<dbReference type="GO" id="GO:0065002">
    <property type="term" value="P:intracellular protein transmembrane transport"/>
    <property type="evidence" value="ECO:0007669"/>
    <property type="project" value="UniProtKB-UniRule"/>
</dbReference>
<dbReference type="GO" id="GO:0017038">
    <property type="term" value="P:protein import"/>
    <property type="evidence" value="ECO:0007669"/>
    <property type="project" value="InterPro"/>
</dbReference>
<dbReference type="GO" id="GO:0006605">
    <property type="term" value="P:protein targeting"/>
    <property type="evidence" value="ECO:0007669"/>
    <property type="project" value="UniProtKB-UniRule"/>
</dbReference>
<dbReference type="GO" id="GO:0043952">
    <property type="term" value="P:protein transport by the Sec complex"/>
    <property type="evidence" value="ECO:0007669"/>
    <property type="project" value="TreeGrafter"/>
</dbReference>
<dbReference type="CDD" id="cd17928">
    <property type="entry name" value="DEXDc_SecA"/>
    <property type="match status" value="1"/>
</dbReference>
<dbReference type="CDD" id="cd18803">
    <property type="entry name" value="SF2_C_secA"/>
    <property type="match status" value="1"/>
</dbReference>
<dbReference type="FunFam" id="3.40.50.300:FF:000429">
    <property type="entry name" value="Preprotein translocase subunit SecA"/>
    <property type="match status" value="1"/>
</dbReference>
<dbReference type="FunFam" id="1.10.3060.10:FF:000003">
    <property type="entry name" value="Protein translocase subunit SecA"/>
    <property type="match status" value="1"/>
</dbReference>
<dbReference type="FunFam" id="3.40.50.300:FF:000334">
    <property type="entry name" value="Protein translocase subunit SecA"/>
    <property type="match status" value="1"/>
</dbReference>
<dbReference type="FunFam" id="3.90.1440.10:FF:000002">
    <property type="entry name" value="Protein translocase subunit SecA"/>
    <property type="match status" value="1"/>
</dbReference>
<dbReference type="Gene3D" id="1.10.3060.10">
    <property type="entry name" value="Helical scaffold and wing domains of SecA"/>
    <property type="match status" value="1"/>
</dbReference>
<dbReference type="Gene3D" id="3.40.50.300">
    <property type="entry name" value="P-loop containing nucleotide triphosphate hydrolases"/>
    <property type="match status" value="3"/>
</dbReference>
<dbReference type="Gene3D" id="3.90.1440.10">
    <property type="entry name" value="SecA, preprotein cross-linking domain"/>
    <property type="match status" value="1"/>
</dbReference>
<dbReference type="HAMAP" id="MF_01382">
    <property type="entry name" value="SecA"/>
    <property type="match status" value="1"/>
</dbReference>
<dbReference type="InterPro" id="IPR014001">
    <property type="entry name" value="Helicase_ATP-bd"/>
</dbReference>
<dbReference type="InterPro" id="IPR001650">
    <property type="entry name" value="Helicase_C-like"/>
</dbReference>
<dbReference type="InterPro" id="IPR027417">
    <property type="entry name" value="P-loop_NTPase"/>
</dbReference>
<dbReference type="InterPro" id="IPR004027">
    <property type="entry name" value="SEC_C_motif"/>
</dbReference>
<dbReference type="InterPro" id="IPR000185">
    <property type="entry name" value="SecA"/>
</dbReference>
<dbReference type="InterPro" id="IPR020937">
    <property type="entry name" value="SecA_CS"/>
</dbReference>
<dbReference type="InterPro" id="IPR011115">
    <property type="entry name" value="SecA_DEAD"/>
</dbReference>
<dbReference type="InterPro" id="IPR014018">
    <property type="entry name" value="SecA_motor_DEAD"/>
</dbReference>
<dbReference type="InterPro" id="IPR011130">
    <property type="entry name" value="SecA_preprotein_X-link_dom"/>
</dbReference>
<dbReference type="InterPro" id="IPR044722">
    <property type="entry name" value="SecA_SF2_C"/>
</dbReference>
<dbReference type="InterPro" id="IPR011116">
    <property type="entry name" value="SecA_Wing/Scaffold"/>
</dbReference>
<dbReference type="InterPro" id="IPR036266">
    <property type="entry name" value="SecA_Wing/Scaffold_sf"/>
</dbReference>
<dbReference type="InterPro" id="IPR036670">
    <property type="entry name" value="SecA_X-link_sf"/>
</dbReference>
<dbReference type="NCBIfam" id="NF006630">
    <property type="entry name" value="PRK09200.1"/>
    <property type="match status" value="1"/>
</dbReference>
<dbReference type="NCBIfam" id="NF009538">
    <property type="entry name" value="PRK12904.1"/>
    <property type="match status" value="1"/>
</dbReference>
<dbReference type="NCBIfam" id="TIGR00963">
    <property type="entry name" value="secA"/>
    <property type="match status" value="1"/>
</dbReference>
<dbReference type="PANTHER" id="PTHR30612:SF0">
    <property type="entry name" value="CHLOROPLAST PROTEIN-TRANSPORTING ATPASE"/>
    <property type="match status" value="1"/>
</dbReference>
<dbReference type="PANTHER" id="PTHR30612">
    <property type="entry name" value="SECA INNER MEMBRANE COMPONENT OF SEC PROTEIN SECRETION SYSTEM"/>
    <property type="match status" value="1"/>
</dbReference>
<dbReference type="Pfam" id="PF21090">
    <property type="entry name" value="P-loop_SecA"/>
    <property type="match status" value="1"/>
</dbReference>
<dbReference type="Pfam" id="PF02810">
    <property type="entry name" value="SEC-C"/>
    <property type="match status" value="1"/>
</dbReference>
<dbReference type="Pfam" id="PF07517">
    <property type="entry name" value="SecA_DEAD"/>
    <property type="match status" value="1"/>
</dbReference>
<dbReference type="Pfam" id="PF01043">
    <property type="entry name" value="SecA_PP_bind"/>
    <property type="match status" value="1"/>
</dbReference>
<dbReference type="Pfam" id="PF07516">
    <property type="entry name" value="SecA_SW"/>
    <property type="match status" value="1"/>
</dbReference>
<dbReference type="PRINTS" id="PR00906">
    <property type="entry name" value="SECA"/>
</dbReference>
<dbReference type="SMART" id="SM00957">
    <property type="entry name" value="SecA_DEAD"/>
    <property type="match status" value="1"/>
</dbReference>
<dbReference type="SMART" id="SM00958">
    <property type="entry name" value="SecA_PP_bind"/>
    <property type="match status" value="1"/>
</dbReference>
<dbReference type="SUPFAM" id="SSF81886">
    <property type="entry name" value="Helical scaffold and wing domains of SecA"/>
    <property type="match status" value="1"/>
</dbReference>
<dbReference type="SUPFAM" id="SSF52540">
    <property type="entry name" value="P-loop containing nucleoside triphosphate hydrolases"/>
    <property type="match status" value="2"/>
</dbReference>
<dbReference type="SUPFAM" id="SSF81767">
    <property type="entry name" value="Pre-protein crosslinking domain of SecA"/>
    <property type="match status" value="1"/>
</dbReference>
<dbReference type="PROSITE" id="PS01312">
    <property type="entry name" value="SECA"/>
    <property type="match status" value="1"/>
</dbReference>
<dbReference type="PROSITE" id="PS51196">
    <property type="entry name" value="SECA_MOTOR_DEAD"/>
    <property type="match status" value="1"/>
</dbReference>
<keyword id="KW-0067">ATP-binding</keyword>
<keyword id="KW-0997">Cell inner membrane</keyword>
<keyword id="KW-1003">Cell membrane</keyword>
<keyword id="KW-0963">Cytoplasm</keyword>
<keyword id="KW-0472">Membrane</keyword>
<keyword id="KW-0479">Metal-binding</keyword>
<keyword id="KW-0547">Nucleotide-binding</keyword>
<keyword id="KW-0653">Protein transport</keyword>
<keyword id="KW-1185">Reference proteome</keyword>
<keyword id="KW-1278">Translocase</keyword>
<keyword id="KW-0811">Translocation</keyword>
<keyword id="KW-0813">Transport</keyword>
<keyword id="KW-0862">Zinc</keyword>
<accession>B8CYM4</accession>
<feature type="chain" id="PRO_1000184232" description="Protein translocase subunit SecA">
    <location>
        <begin position="1"/>
        <end position="845"/>
    </location>
</feature>
<feature type="region of interest" description="Disordered" evidence="2">
    <location>
        <begin position="804"/>
        <end position="838"/>
    </location>
</feature>
<feature type="compositionally biased region" description="Basic residues" evidence="2">
    <location>
        <begin position="809"/>
        <end position="818"/>
    </location>
</feature>
<feature type="binding site" evidence="1">
    <location>
        <position position="88"/>
    </location>
    <ligand>
        <name>ATP</name>
        <dbReference type="ChEBI" id="CHEBI:30616"/>
    </ligand>
</feature>
<feature type="binding site" evidence="1">
    <location>
        <begin position="106"/>
        <end position="110"/>
    </location>
    <ligand>
        <name>ATP</name>
        <dbReference type="ChEBI" id="CHEBI:30616"/>
    </ligand>
</feature>
<feature type="binding site" evidence="1">
    <location>
        <position position="495"/>
    </location>
    <ligand>
        <name>ATP</name>
        <dbReference type="ChEBI" id="CHEBI:30616"/>
    </ligand>
</feature>
<feature type="binding site" evidence="1">
    <location>
        <position position="831"/>
    </location>
    <ligand>
        <name>Zn(2+)</name>
        <dbReference type="ChEBI" id="CHEBI:29105"/>
    </ligand>
</feature>
<feature type="binding site" evidence="1">
    <location>
        <position position="833"/>
    </location>
    <ligand>
        <name>Zn(2+)</name>
        <dbReference type="ChEBI" id="CHEBI:29105"/>
    </ligand>
</feature>
<feature type="binding site" evidence="1">
    <location>
        <position position="842"/>
    </location>
    <ligand>
        <name>Zn(2+)</name>
        <dbReference type="ChEBI" id="CHEBI:29105"/>
    </ligand>
</feature>
<feature type="binding site" evidence="1">
    <location>
        <position position="843"/>
    </location>
    <ligand>
        <name>Zn(2+)</name>
        <dbReference type="ChEBI" id="CHEBI:29105"/>
    </ligand>
</feature>
<evidence type="ECO:0000255" key="1">
    <source>
        <dbReference type="HAMAP-Rule" id="MF_01382"/>
    </source>
</evidence>
<evidence type="ECO:0000256" key="2">
    <source>
        <dbReference type="SAM" id="MobiDB-lite"/>
    </source>
</evidence>
<comment type="function">
    <text evidence="1">Part of the Sec protein translocase complex. Interacts with the SecYEG preprotein conducting channel. Has a central role in coupling the hydrolysis of ATP to the transfer of proteins into and across the cell membrane, serving as an ATP-driven molecular motor driving the stepwise translocation of polypeptide chains across the membrane.</text>
</comment>
<comment type="catalytic activity">
    <reaction evidence="1">
        <text>ATP + H2O + cellular proteinSide 1 = ADP + phosphate + cellular proteinSide 2.</text>
        <dbReference type="EC" id="7.4.2.8"/>
    </reaction>
</comment>
<comment type="cofactor">
    <cofactor evidence="1">
        <name>Zn(2+)</name>
        <dbReference type="ChEBI" id="CHEBI:29105"/>
    </cofactor>
    <text evidence="1">May bind 1 zinc ion per subunit.</text>
</comment>
<comment type="subunit">
    <text evidence="1">Monomer and homodimer. Part of the essential Sec protein translocation apparatus which comprises SecA, SecYEG and auxiliary proteins SecDF. Other proteins may also be involved.</text>
</comment>
<comment type="subcellular location">
    <subcellularLocation>
        <location evidence="1">Cell inner membrane</location>
        <topology evidence="1">Peripheral membrane protein</topology>
        <orientation evidence="1">Cytoplasmic side</orientation>
    </subcellularLocation>
    <subcellularLocation>
        <location evidence="1">Cytoplasm</location>
    </subcellularLocation>
    <text evidence="1">Distribution is 50-50.</text>
</comment>
<comment type="similarity">
    <text evidence="1">Belongs to the SecA family.</text>
</comment>
<name>SECA_HALOH</name>
<sequence length="845" mass="97672">MLKFIKNIFKDSNTRELEKLQHIVDEINSLEPYMKKLSDEQLRDKTREFKERIVKGETLDELLPEAFAVVREAAQRSTSEKFRHYDVQLMGGIVLHQGKIAEMKTGEGKTLAATLPVYLNALTGKGVHVVTVNDYLAKRDSEWMGQIYRFLGLSVGVILNGMTPRERKKAYQADVTYGSNNEFGFDYLRDNLAYNPDDVVQGELHYAILDEVDSILIDEARTPLIISGPAQETTKDYRKFNRIIPRLVKGRDYEVDEKNRTVHLTEEGLARVEKKLNISNLYDDQNFQLAHQLNQALKAHTLMKKDRDYIVKDGEVKIVDEFTGRIMEGRRFSEGLHQAIEAKEGVAVNKESQTFASITYQNFFRMYDKLAGMTGTAATEEEEFIKIYGMEVVQIPTNKPMIREDLPDVVFRTEEAKFKAVAEEVALKYKKGQPVLVGTVDIEKSEKLSRMLKRKGIPHQVLNAKNHEKEAEIIKKAGQKNSVTISTNMAGRGTDIVLGEGVKELGGLHVIGTERHESRRIDNQLRGRSGRQGDPGSSQFFVSLEDDLLRLFGSDNISMLMDRMGFDDDQPIEHKMITRSLERAQKKVEGRNFEIRKTILEYDNIMNKQREIIYEQRKKILFASDLKEYIMGMIEMLVDDIMDTYLSSEVHPDDWDIDGLIKYLSEFNLVNINEEDFKDKDREKIREELIKIATKTYEEKEAEIGKESMQKLIKNLALRIIDRNWMNHLDNMDELRQGIGLRAYGQRDPLTEYKFESYDMFNGMTGTIREEIIKNLFRIEVKEREINLDPIMLKRLKYRRNFLSNRANRPQKKAKRQPIVKPDKPGRNDPCPCGSGKKYKHCCGR</sequence>